<protein>
    <recommendedName>
        <fullName evidence="1">tRNA-2-methylthio-N(6)-dimethylallyladenosine synthase</fullName>
        <ecNumber evidence="1">2.8.4.3</ecNumber>
    </recommendedName>
    <alternativeName>
        <fullName evidence="1">(Dimethylallyl)adenosine tRNA methylthiotransferase MiaB</fullName>
    </alternativeName>
    <alternativeName>
        <fullName evidence="1">tRNA-i(6)A37 methylthiotransferase</fullName>
    </alternativeName>
</protein>
<keyword id="KW-0004">4Fe-4S</keyword>
<keyword id="KW-0963">Cytoplasm</keyword>
<keyword id="KW-0408">Iron</keyword>
<keyword id="KW-0411">Iron-sulfur</keyword>
<keyword id="KW-0479">Metal-binding</keyword>
<keyword id="KW-1185">Reference proteome</keyword>
<keyword id="KW-0949">S-adenosyl-L-methionine</keyword>
<keyword id="KW-0808">Transferase</keyword>
<keyword id="KW-0819">tRNA processing</keyword>
<name>MIAB_ALCBS</name>
<sequence>MARKLFIQTHGCQMNEYDSTRMVDLLESSHGLEPTDNPEEADVLLLNTCSIREKAQEKVFHQLGRWKKLKDAKPDMIIGVGGCVASQEGDAIRDRAPYVDVVFGPQTLHRLPGLITQAASTRELAIDVTFPEIEKFDNLPEPSVDGPSAFVSIMEGCSKYCTFCVVPYTRGEEVSRPVQPVLKEIQHLADMGVREVNLLGQNVNAYQGVGADGDTLDLADLIRLIRDIDGIDRIRYTTSHPVEFSEALIQVYEDVPELVSHLHLPVQSGSDRILAMMKRNHMVLEYKSKLRKLKRIRPDISFSSDFIIGFPGETDRDFEDTMNLIHDIGFDMSFSFIYSARPGTPAADLPDDVDMEVKKQRLAILQQRINQNVQDISRKMVGSTQRILVDGFSKKDPGQLKGRTENNRVVNFQCDDTDLIGKFVDVTIAKAYSNSLLGTDPRNPS</sequence>
<dbReference type="EC" id="2.8.4.3" evidence="1"/>
<dbReference type="EMBL" id="AM286690">
    <property type="protein sequence ID" value="CAL17382.1"/>
    <property type="molecule type" value="Genomic_DNA"/>
</dbReference>
<dbReference type="RefSeq" id="WP_011589213.1">
    <property type="nucleotide sequence ID" value="NC_008260.1"/>
</dbReference>
<dbReference type="SMR" id="Q0VN66"/>
<dbReference type="STRING" id="393595.ABO_1934"/>
<dbReference type="KEGG" id="abo:ABO_1934"/>
<dbReference type="eggNOG" id="COG0621">
    <property type="taxonomic scope" value="Bacteria"/>
</dbReference>
<dbReference type="HOGENOM" id="CLU_018697_2_0_6"/>
<dbReference type="OrthoDB" id="9805215at2"/>
<dbReference type="Proteomes" id="UP000008871">
    <property type="component" value="Chromosome"/>
</dbReference>
<dbReference type="GO" id="GO:0005829">
    <property type="term" value="C:cytosol"/>
    <property type="evidence" value="ECO:0007669"/>
    <property type="project" value="TreeGrafter"/>
</dbReference>
<dbReference type="GO" id="GO:0051539">
    <property type="term" value="F:4 iron, 4 sulfur cluster binding"/>
    <property type="evidence" value="ECO:0007669"/>
    <property type="project" value="UniProtKB-UniRule"/>
</dbReference>
<dbReference type="GO" id="GO:0046872">
    <property type="term" value="F:metal ion binding"/>
    <property type="evidence" value="ECO:0007669"/>
    <property type="project" value="UniProtKB-KW"/>
</dbReference>
<dbReference type="GO" id="GO:0035597">
    <property type="term" value="F:N6-isopentenyladenosine methylthiotransferase activity"/>
    <property type="evidence" value="ECO:0007669"/>
    <property type="project" value="TreeGrafter"/>
</dbReference>
<dbReference type="CDD" id="cd01335">
    <property type="entry name" value="Radical_SAM"/>
    <property type="match status" value="1"/>
</dbReference>
<dbReference type="FunFam" id="3.40.50.12160:FF:000001">
    <property type="entry name" value="tRNA-2-methylthio-N(6)-dimethylallyladenosine synthase"/>
    <property type="match status" value="1"/>
</dbReference>
<dbReference type="FunFam" id="3.80.30.20:FF:000001">
    <property type="entry name" value="tRNA-2-methylthio-N(6)-dimethylallyladenosine synthase 2"/>
    <property type="match status" value="1"/>
</dbReference>
<dbReference type="Gene3D" id="3.40.50.12160">
    <property type="entry name" value="Methylthiotransferase, N-terminal domain"/>
    <property type="match status" value="1"/>
</dbReference>
<dbReference type="Gene3D" id="3.80.30.20">
    <property type="entry name" value="tm_1862 like domain"/>
    <property type="match status" value="1"/>
</dbReference>
<dbReference type="HAMAP" id="MF_01864">
    <property type="entry name" value="tRNA_metthiotr_MiaB"/>
    <property type="match status" value="1"/>
</dbReference>
<dbReference type="InterPro" id="IPR006638">
    <property type="entry name" value="Elp3/MiaA/NifB-like_rSAM"/>
</dbReference>
<dbReference type="InterPro" id="IPR005839">
    <property type="entry name" value="Methylthiotransferase"/>
</dbReference>
<dbReference type="InterPro" id="IPR020612">
    <property type="entry name" value="Methylthiotransferase_CS"/>
</dbReference>
<dbReference type="InterPro" id="IPR013848">
    <property type="entry name" value="Methylthiotransferase_N"/>
</dbReference>
<dbReference type="InterPro" id="IPR038135">
    <property type="entry name" value="Methylthiotransferase_N_sf"/>
</dbReference>
<dbReference type="InterPro" id="IPR006463">
    <property type="entry name" value="MiaB_methiolase"/>
</dbReference>
<dbReference type="InterPro" id="IPR007197">
    <property type="entry name" value="rSAM"/>
</dbReference>
<dbReference type="InterPro" id="IPR023404">
    <property type="entry name" value="rSAM_horseshoe"/>
</dbReference>
<dbReference type="InterPro" id="IPR002792">
    <property type="entry name" value="TRAM_dom"/>
</dbReference>
<dbReference type="NCBIfam" id="TIGR01574">
    <property type="entry name" value="miaB-methiolase"/>
    <property type="match status" value="1"/>
</dbReference>
<dbReference type="NCBIfam" id="TIGR00089">
    <property type="entry name" value="MiaB/RimO family radical SAM methylthiotransferase"/>
    <property type="match status" value="1"/>
</dbReference>
<dbReference type="PANTHER" id="PTHR43020">
    <property type="entry name" value="CDK5 REGULATORY SUBUNIT-ASSOCIATED PROTEIN 1"/>
    <property type="match status" value="1"/>
</dbReference>
<dbReference type="PANTHER" id="PTHR43020:SF2">
    <property type="entry name" value="MITOCHONDRIAL TRNA METHYLTHIOTRANSFERASE CDK5RAP1"/>
    <property type="match status" value="1"/>
</dbReference>
<dbReference type="Pfam" id="PF04055">
    <property type="entry name" value="Radical_SAM"/>
    <property type="match status" value="1"/>
</dbReference>
<dbReference type="Pfam" id="PF01938">
    <property type="entry name" value="TRAM"/>
    <property type="match status" value="1"/>
</dbReference>
<dbReference type="Pfam" id="PF00919">
    <property type="entry name" value="UPF0004"/>
    <property type="match status" value="1"/>
</dbReference>
<dbReference type="SFLD" id="SFLDF00273">
    <property type="entry name" value="(dimethylallyl)adenosine_tRNA"/>
    <property type="match status" value="1"/>
</dbReference>
<dbReference type="SFLD" id="SFLDG01082">
    <property type="entry name" value="B12-binding_domain_containing"/>
    <property type="match status" value="1"/>
</dbReference>
<dbReference type="SFLD" id="SFLDG01061">
    <property type="entry name" value="methylthiotransferase"/>
    <property type="match status" value="1"/>
</dbReference>
<dbReference type="SMART" id="SM00729">
    <property type="entry name" value="Elp3"/>
    <property type="match status" value="1"/>
</dbReference>
<dbReference type="SUPFAM" id="SSF102114">
    <property type="entry name" value="Radical SAM enzymes"/>
    <property type="match status" value="1"/>
</dbReference>
<dbReference type="PROSITE" id="PS51449">
    <property type="entry name" value="MTTASE_N"/>
    <property type="match status" value="1"/>
</dbReference>
<dbReference type="PROSITE" id="PS01278">
    <property type="entry name" value="MTTASE_RADICAL"/>
    <property type="match status" value="1"/>
</dbReference>
<dbReference type="PROSITE" id="PS51918">
    <property type="entry name" value="RADICAL_SAM"/>
    <property type="match status" value="1"/>
</dbReference>
<dbReference type="PROSITE" id="PS50926">
    <property type="entry name" value="TRAM"/>
    <property type="match status" value="1"/>
</dbReference>
<comment type="function">
    <text evidence="1">Catalyzes the methylthiolation of N6-(dimethylallyl)adenosine (i(6)A), leading to the formation of 2-methylthio-N6-(dimethylallyl)adenosine (ms(2)i(6)A) at position 37 in tRNAs that read codons beginning with uridine.</text>
</comment>
<comment type="catalytic activity">
    <reaction evidence="1">
        <text>N(6)-dimethylallyladenosine(37) in tRNA + (sulfur carrier)-SH + AH2 + 2 S-adenosyl-L-methionine = 2-methylsulfanyl-N(6)-dimethylallyladenosine(37) in tRNA + (sulfur carrier)-H + 5'-deoxyadenosine + L-methionine + A + S-adenosyl-L-homocysteine + 2 H(+)</text>
        <dbReference type="Rhea" id="RHEA:37067"/>
        <dbReference type="Rhea" id="RHEA-COMP:10375"/>
        <dbReference type="Rhea" id="RHEA-COMP:10376"/>
        <dbReference type="Rhea" id="RHEA-COMP:14737"/>
        <dbReference type="Rhea" id="RHEA-COMP:14739"/>
        <dbReference type="ChEBI" id="CHEBI:13193"/>
        <dbReference type="ChEBI" id="CHEBI:15378"/>
        <dbReference type="ChEBI" id="CHEBI:17319"/>
        <dbReference type="ChEBI" id="CHEBI:17499"/>
        <dbReference type="ChEBI" id="CHEBI:29917"/>
        <dbReference type="ChEBI" id="CHEBI:57844"/>
        <dbReference type="ChEBI" id="CHEBI:57856"/>
        <dbReference type="ChEBI" id="CHEBI:59789"/>
        <dbReference type="ChEBI" id="CHEBI:64428"/>
        <dbReference type="ChEBI" id="CHEBI:74415"/>
        <dbReference type="ChEBI" id="CHEBI:74417"/>
        <dbReference type="EC" id="2.8.4.3"/>
    </reaction>
</comment>
<comment type="cofactor">
    <cofactor evidence="1">
        <name>[4Fe-4S] cluster</name>
        <dbReference type="ChEBI" id="CHEBI:49883"/>
    </cofactor>
    <text evidence="1">Binds 2 [4Fe-4S] clusters. One cluster is coordinated with 3 cysteines and an exchangeable S-adenosyl-L-methionine.</text>
</comment>
<comment type="subunit">
    <text evidence="1">Monomer.</text>
</comment>
<comment type="subcellular location">
    <subcellularLocation>
        <location evidence="1">Cytoplasm</location>
    </subcellularLocation>
</comment>
<comment type="similarity">
    <text evidence="1">Belongs to the methylthiotransferase family. MiaB subfamily.</text>
</comment>
<gene>
    <name evidence="1" type="primary">miaB</name>
    <name type="ordered locus">ABO_1934</name>
</gene>
<proteinExistence type="inferred from homology"/>
<organism>
    <name type="scientific">Alcanivorax borkumensis (strain ATCC 700651 / DSM 11573 / NCIMB 13689 / SK2)</name>
    <dbReference type="NCBI Taxonomy" id="393595"/>
    <lineage>
        <taxon>Bacteria</taxon>
        <taxon>Pseudomonadati</taxon>
        <taxon>Pseudomonadota</taxon>
        <taxon>Gammaproteobacteria</taxon>
        <taxon>Oceanospirillales</taxon>
        <taxon>Alcanivoracaceae</taxon>
        <taxon>Alcanivorax</taxon>
    </lineage>
</organism>
<accession>Q0VN66</accession>
<feature type="chain" id="PRO_0000374101" description="tRNA-2-methylthio-N(6)-dimethylallyladenosine synthase">
    <location>
        <begin position="1"/>
        <end position="445"/>
    </location>
</feature>
<feature type="domain" description="MTTase N-terminal" evidence="1">
    <location>
        <begin position="3"/>
        <end position="120"/>
    </location>
</feature>
<feature type="domain" description="Radical SAM core" evidence="2">
    <location>
        <begin position="143"/>
        <end position="375"/>
    </location>
</feature>
<feature type="domain" description="TRAM" evidence="1">
    <location>
        <begin position="378"/>
        <end position="442"/>
    </location>
</feature>
<feature type="binding site" evidence="1">
    <location>
        <position position="12"/>
    </location>
    <ligand>
        <name>[4Fe-4S] cluster</name>
        <dbReference type="ChEBI" id="CHEBI:49883"/>
        <label>1</label>
    </ligand>
</feature>
<feature type="binding site" evidence="1">
    <location>
        <position position="49"/>
    </location>
    <ligand>
        <name>[4Fe-4S] cluster</name>
        <dbReference type="ChEBI" id="CHEBI:49883"/>
        <label>1</label>
    </ligand>
</feature>
<feature type="binding site" evidence="1">
    <location>
        <position position="83"/>
    </location>
    <ligand>
        <name>[4Fe-4S] cluster</name>
        <dbReference type="ChEBI" id="CHEBI:49883"/>
        <label>1</label>
    </ligand>
</feature>
<feature type="binding site" evidence="1">
    <location>
        <position position="157"/>
    </location>
    <ligand>
        <name>[4Fe-4S] cluster</name>
        <dbReference type="ChEBI" id="CHEBI:49883"/>
        <label>2</label>
        <note>4Fe-4S-S-AdoMet</note>
    </ligand>
</feature>
<feature type="binding site" evidence="1">
    <location>
        <position position="161"/>
    </location>
    <ligand>
        <name>[4Fe-4S] cluster</name>
        <dbReference type="ChEBI" id="CHEBI:49883"/>
        <label>2</label>
        <note>4Fe-4S-S-AdoMet</note>
    </ligand>
</feature>
<feature type="binding site" evidence="1">
    <location>
        <position position="164"/>
    </location>
    <ligand>
        <name>[4Fe-4S] cluster</name>
        <dbReference type="ChEBI" id="CHEBI:49883"/>
        <label>2</label>
        <note>4Fe-4S-S-AdoMet</note>
    </ligand>
</feature>
<reference key="1">
    <citation type="journal article" date="2006" name="Nat. Biotechnol.">
        <title>Genome sequence of the ubiquitous hydrocarbon-degrading marine bacterium Alcanivorax borkumensis.</title>
        <authorList>
            <person name="Schneiker S."/>
            <person name="Martins dos Santos V.A.P."/>
            <person name="Bartels D."/>
            <person name="Bekel T."/>
            <person name="Brecht M."/>
            <person name="Buhrmester J."/>
            <person name="Chernikova T.N."/>
            <person name="Denaro R."/>
            <person name="Ferrer M."/>
            <person name="Gertler C."/>
            <person name="Goesmann A."/>
            <person name="Golyshina O.V."/>
            <person name="Kaminski F."/>
            <person name="Khachane A.N."/>
            <person name="Lang S."/>
            <person name="Linke B."/>
            <person name="McHardy A.C."/>
            <person name="Meyer F."/>
            <person name="Nechitaylo T."/>
            <person name="Puehler A."/>
            <person name="Regenhardt D."/>
            <person name="Rupp O."/>
            <person name="Sabirova J.S."/>
            <person name="Selbitschka W."/>
            <person name="Yakimov M.M."/>
            <person name="Timmis K.N."/>
            <person name="Vorhoelter F.-J."/>
            <person name="Weidner S."/>
            <person name="Kaiser O."/>
            <person name="Golyshin P.N."/>
        </authorList>
    </citation>
    <scope>NUCLEOTIDE SEQUENCE [LARGE SCALE GENOMIC DNA]</scope>
    <source>
        <strain>ATCC 700651 / DSM 11573 / NCIMB 13689 / SK2</strain>
    </source>
</reference>
<evidence type="ECO:0000255" key="1">
    <source>
        <dbReference type="HAMAP-Rule" id="MF_01864"/>
    </source>
</evidence>
<evidence type="ECO:0000255" key="2">
    <source>
        <dbReference type="PROSITE-ProRule" id="PRU01266"/>
    </source>
</evidence>